<organism>
    <name type="scientific">Leuconostoc mesenteroides subsp. mesenteroides (strain ATCC 8293 / DSM 20343 / BCRC 11652 / CCM 1803 / JCM 6124 / NCDO 523 / NBRC 100496 / NCIMB 8023 / NCTC 12954 / NRRL B-1118 / 37Y)</name>
    <dbReference type="NCBI Taxonomy" id="203120"/>
    <lineage>
        <taxon>Bacteria</taxon>
        <taxon>Bacillati</taxon>
        <taxon>Bacillota</taxon>
        <taxon>Bacilli</taxon>
        <taxon>Lactobacillales</taxon>
        <taxon>Lactobacillaceae</taxon>
        <taxon>Leuconostoc</taxon>
    </lineage>
</organism>
<proteinExistence type="inferred from homology"/>
<comment type="similarity">
    <text evidence="1">Belongs to the UPF0297 family.</text>
</comment>
<protein>
    <recommendedName>
        <fullName evidence="1">UPF0297 protein LEUM_0557</fullName>
    </recommendedName>
</protein>
<dbReference type="EMBL" id="CP000414">
    <property type="protein sequence ID" value="ABJ61671.1"/>
    <property type="molecule type" value="Genomic_DNA"/>
</dbReference>
<dbReference type="RefSeq" id="WP_004164519.1">
    <property type="nucleotide sequence ID" value="NC_008531.1"/>
</dbReference>
<dbReference type="SMR" id="Q03YQ1"/>
<dbReference type="EnsemblBacteria" id="ABJ61671">
    <property type="protein sequence ID" value="ABJ61671"/>
    <property type="gene ID" value="LEUM_0557"/>
</dbReference>
<dbReference type="KEGG" id="lme:LEUM_0557"/>
<dbReference type="eggNOG" id="COG4472">
    <property type="taxonomic scope" value="Bacteria"/>
</dbReference>
<dbReference type="HOGENOM" id="CLU_162466_0_0_9"/>
<dbReference type="Proteomes" id="UP000000362">
    <property type="component" value="Chromosome"/>
</dbReference>
<dbReference type="HAMAP" id="MF_01507">
    <property type="entry name" value="UPF0297"/>
    <property type="match status" value="1"/>
</dbReference>
<dbReference type="InterPro" id="IPR009309">
    <property type="entry name" value="IreB"/>
</dbReference>
<dbReference type="NCBIfam" id="NF003997">
    <property type="entry name" value="PRK05473.1"/>
    <property type="match status" value="1"/>
</dbReference>
<dbReference type="PANTHER" id="PTHR40067">
    <property type="entry name" value="UPF0297 PROTEIN YRZL"/>
    <property type="match status" value="1"/>
</dbReference>
<dbReference type="PANTHER" id="PTHR40067:SF1">
    <property type="entry name" value="UPF0297 PROTEIN YRZL"/>
    <property type="match status" value="1"/>
</dbReference>
<dbReference type="Pfam" id="PF06135">
    <property type="entry name" value="IreB"/>
    <property type="match status" value="1"/>
</dbReference>
<dbReference type="PIRSF" id="PIRSF037258">
    <property type="entry name" value="DUF965_bac"/>
    <property type="match status" value="1"/>
</dbReference>
<keyword id="KW-1185">Reference proteome</keyword>
<name>Y557_LEUMM</name>
<evidence type="ECO:0000255" key="1">
    <source>
        <dbReference type="HAMAP-Rule" id="MF_01507"/>
    </source>
</evidence>
<gene>
    <name type="ordered locus">LEUM_0557</name>
</gene>
<feature type="chain" id="PRO_0000289307" description="UPF0297 protein LEUM_0557">
    <location>
        <begin position="1"/>
        <end position="83"/>
    </location>
</feature>
<reference key="1">
    <citation type="journal article" date="2006" name="Proc. Natl. Acad. Sci. U.S.A.">
        <title>Comparative genomics of the lactic acid bacteria.</title>
        <authorList>
            <person name="Makarova K.S."/>
            <person name="Slesarev A."/>
            <person name="Wolf Y.I."/>
            <person name="Sorokin A."/>
            <person name="Mirkin B."/>
            <person name="Koonin E.V."/>
            <person name="Pavlov A."/>
            <person name="Pavlova N."/>
            <person name="Karamychev V."/>
            <person name="Polouchine N."/>
            <person name="Shakhova V."/>
            <person name="Grigoriev I."/>
            <person name="Lou Y."/>
            <person name="Rohksar D."/>
            <person name="Lucas S."/>
            <person name="Huang K."/>
            <person name="Goodstein D.M."/>
            <person name="Hawkins T."/>
            <person name="Plengvidhya V."/>
            <person name="Welker D."/>
            <person name="Hughes J."/>
            <person name="Goh Y."/>
            <person name="Benson A."/>
            <person name="Baldwin K."/>
            <person name="Lee J.-H."/>
            <person name="Diaz-Muniz I."/>
            <person name="Dosti B."/>
            <person name="Smeianov V."/>
            <person name="Wechter W."/>
            <person name="Barabote R."/>
            <person name="Lorca G."/>
            <person name="Altermann E."/>
            <person name="Barrangou R."/>
            <person name="Ganesan B."/>
            <person name="Xie Y."/>
            <person name="Rawsthorne H."/>
            <person name="Tamir D."/>
            <person name="Parker C."/>
            <person name="Breidt F."/>
            <person name="Broadbent J.R."/>
            <person name="Hutkins R."/>
            <person name="O'Sullivan D."/>
            <person name="Steele J."/>
            <person name="Unlu G."/>
            <person name="Saier M.H. Jr."/>
            <person name="Klaenhammer T."/>
            <person name="Richardson P."/>
            <person name="Kozyavkin S."/>
            <person name="Weimer B.C."/>
            <person name="Mills D.A."/>
        </authorList>
    </citation>
    <scope>NUCLEOTIDE SEQUENCE [LARGE SCALE GENOMIC DNA]</scope>
    <source>
        <strain>ATCC 8293 / DSM 20343 / BCRC 11652 / CCM 1803 / JCM 6124 / NCDO 523 / NBRC 100496 / NCIMB 8023 / NCTC 12954 / NRRL B-1118 / 37Y</strain>
    </source>
</reference>
<accession>Q03YQ1</accession>
<sequence length="83" mass="9608">MTVGDETAIFDFGNQMPKDIHETLEIVYSSLEEKGYNPINQIVGYLMSGDPAYIPRLNDARNLIKRHERDEIIEELVHAYLKK</sequence>